<comment type="function">
    <text evidence="1">Part of the ABC transporter complex LsrABCD involved in autoinducer 2 (AI-2) import. Probably responsible for the translocation of the substrate across the membrane (By similarity).</text>
</comment>
<comment type="subunit">
    <text evidence="1">The complex is composed of two ATP-binding proteins (LsrA), two transmembrane proteins (LsrC and LsrD) and a solute-binding protein (LsrB).</text>
</comment>
<comment type="subcellular location">
    <subcellularLocation>
        <location evidence="1">Cell inner membrane</location>
        <topology evidence="1">Multi-pass membrane protein</topology>
    </subcellularLocation>
</comment>
<comment type="similarity">
    <text evidence="3">Belongs to the binding-protein-dependent transport system permease family. AraH/RbsC subfamily.</text>
</comment>
<feature type="chain" id="PRO_0000351375" description="Autoinducer 2 import system permease protein LsrD">
    <location>
        <begin position="1"/>
        <end position="332"/>
    </location>
</feature>
<feature type="transmembrane region" description="Helical" evidence="2">
    <location>
        <begin position="7"/>
        <end position="27"/>
    </location>
</feature>
<feature type="transmembrane region" description="Helical" evidence="2">
    <location>
        <begin position="45"/>
        <end position="65"/>
    </location>
</feature>
<feature type="transmembrane region" description="Helical" evidence="2">
    <location>
        <begin position="70"/>
        <end position="90"/>
    </location>
</feature>
<feature type="transmembrane region" description="Helical" evidence="2">
    <location>
        <begin position="91"/>
        <end position="111"/>
    </location>
</feature>
<feature type="transmembrane region" description="Helical" evidence="2">
    <location>
        <begin position="118"/>
        <end position="138"/>
    </location>
</feature>
<feature type="transmembrane region" description="Helical" evidence="2">
    <location>
        <begin position="162"/>
        <end position="182"/>
    </location>
</feature>
<feature type="transmembrane region" description="Helical" evidence="2">
    <location>
        <begin position="216"/>
        <end position="236"/>
    </location>
</feature>
<feature type="transmembrane region" description="Helical" evidence="2">
    <location>
        <begin position="240"/>
        <end position="260"/>
    </location>
</feature>
<feature type="transmembrane region" description="Helical" evidence="2">
    <location>
        <begin position="261"/>
        <end position="281"/>
    </location>
</feature>
<feature type="transmembrane region" description="Helical" evidence="2">
    <location>
        <begin position="288"/>
        <end position="308"/>
    </location>
</feature>
<dbReference type="EMBL" id="CP000886">
    <property type="protein sequence ID" value="ABX70341.1"/>
    <property type="molecule type" value="Genomic_DNA"/>
</dbReference>
<dbReference type="KEGG" id="spq:SPAB_05050"/>
<dbReference type="PATRIC" id="fig|1016998.12.peg.4740"/>
<dbReference type="HOGENOM" id="CLU_028880_0_0_6"/>
<dbReference type="Proteomes" id="UP000008556">
    <property type="component" value="Chromosome"/>
</dbReference>
<dbReference type="GO" id="GO:0005886">
    <property type="term" value="C:plasma membrane"/>
    <property type="evidence" value="ECO:0007669"/>
    <property type="project" value="UniProtKB-SubCell"/>
</dbReference>
<dbReference type="GO" id="GO:0022857">
    <property type="term" value="F:transmembrane transporter activity"/>
    <property type="evidence" value="ECO:0007669"/>
    <property type="project" value="InterPro"/>
</dbReference>
<dbReference type="CDD" id="cd06579">
    <property type="entry name" value="TM_PBP1_transp_AraH_like"/>
    <property type="match status" value="1"/>
</dbReference>
<dbReference type="InterPro" id="IPR001851">
    <property type="entry name" value="ABC_transp_permease"/>
</dbReference>
<dbReference type="NCBIfam" id="NF011612">
    <property type="entry name" value="PRK15038.1"/>
    <property type="match status" value="1"/>
</dbReference>
<dbReference type="PANTHER" id="PTHR32196">
    <property type="entry name" value="ABC TRANSPORTER PERMEASE PROTEIN YPHD-RELATED-RELATED"/>
    <property type="match status" value="1"/>
</dbReference>
<dbReference type="PANTHER" id="PTHR32196:SF71">
    <property type="entry name" value="AUTOINDUCER 2 IMPORT SYSTEM PERMEASE PROTEIN LSRD"/>
    <property type="match status" value="1"/>
</dbReference>
<dbReference type="Pfam" id="PF02653">
    <property type="entry name" value="BPD_transp_2"/>
    <property type="match status" value="1"/>
</dbReference>
<accession>A9MZG3</accession>
<gene>
    <name type="primary">lsrD</name>
    <name type="ordered locus">SPAB_05050</name>
</gene>
<name>LSRD_SALPB</name>
<keyword id="KW-0997">Cell inner membrane</keyword>
<keyword id="KW-1003">Cell membrane</keyword>
<keyword id="KW-0472">Membrane</keyword>
<keyword id="KW-0812">Transmembrane</keyword>
<keyword id="KW-1133">Transmembrane helix</keyword>
<keyword id="KW-0813">Transport</keyword>
<sequence>MNPWRRYSWEIALAALLIFEILAFGLINPRLLDINVLLFSTSDFICIGIVALPLTMVIVSGGMDISFGSTIGLCAITLGVLFQLGMPLPLAIIITLLLGAICGLINAGLIIYTGVNPLVITLGTMYLFGGSALLLSGMAGATGYEGIGGFPTAFTDFANISFLGIPMPLIFFLVCCLFFWLLMHRTHMGRNVFLIGQSARVAQYSAIPVNRTLYTVYAMTGCASAIAAVLLVSYFGSARSDLGASFLMPAITAVVLGGANIYGGSGSIMGSALAALLVGFLQQGLQMAGVPNQISSALSGALLIVVVVGRSVSLHRHQILEWYSRRRNAHQA</sequence>
<protein>
    <recommendedName>
        <fullName>Autoinducer 2 import system permease protein LsrD</fullName>
        <shortName>AI-2 import system permease protein LsrD</shortName>
    </recommendedName>
</protein>
<evidence type="ECO:0000250" key="1"/>
<evidence type="ECO:0000255" key="2"/>
<evidence type="ECO:0000305" key="3"/>
<proteinExistence type="inferred from homology"/>
<organism>
    <name type="scientific">Salmonella paratyphi B (strain ATCC BAA-1250 / SPB7)</name>
    <dbReference type="NCBI Taxonomy" id="1016998"/>
    <lineage>
        <taxon>Bacteria</taxon>
        <taxon>Pseudomonadati</taxon>
        <taxon>Pseudomonadota</taxon>
        <taxon>Gammaproteobacteria</taxon>
        <taxon>Enterobacterales</taxon>
        <taxon>Enterobacteriaceae</taxon>
        <taxon>Salmonella</taxon>
    </lineage>
</organism>
<reference key="1">
    <citation type="submission" date="2007-11" db="EMBL/GenBank/DDBJ databases">
        <authorList>
            <consortium name="The Salmonella enterica serovar Paratyphi B Genome Sequencing Project"/>
            <person name="McClelland M."/>
            <person name="Sanderson E.K."/>
            <person name="Porwollik S."/>
            <person name="Spieth J."/>
            <person name="Clifton W.S."/>
            <person name="Fulton R."/>
            <person name="Cordes M."/>
            <person name="Wollam A."/>
            <person name="Shah N."/>
            <person name="Pepin K."/>
            <person name="Bhonagiri V."/>
            <person name="Nash W."/>
            <person name="Johnson M."/>
            <person name="Thiruvilangam P."/>
            <person name="Wilson R."/>
        </authorList>
    </citation>
    <scope>NUCLEOTIDE SEQUENCE [LARGE SCALE GENOMIC DNA]</scope>
    <source>
        <strain>ATCC BAA-1250 / SPB7</strain>
    </source>
</reference>